<gene>
    <name type="primary">CAV2</name>
</gene>
<sequence>MGLETEKADVQLFMDDDSYSHHSGLEYADPEKFADSGQDRDPHRLNSHLKLGFEDVIAEPVTTHSFDKVWICSHALFEISKYVMYKFLTVFLAIPLAFIAGILFATLSCLHIWILMPFVKTCLMVLPSVQTIWKSVTDVFIAPLCTSVGRSFSSVSLQLSQD</sequence>
<dbReference type="EMBL" id="DP000029">
    <property type="protein sequence ID" value="ABC87483.1"/>
    <property type="molecule type" value="Genomic_DNA"/>
</dbReference>
<dbReference type="SMR" id="Q2IBA4"/>
<dbReference type="GO" id="GO:0005901">
    <property type="term" value="C:caveola"/>
    <property type="evidence" value="ECO:0000250"/>
    <property type="project" value="UniProtKB"/>
</dbReference>
<dbReference type="GO" id="GO:0031410">
    <property type="term" value="C:cytoplasmic vesicle"/>
    <property type="evidence" value="ECO:0007669"/>
    <property type="project" value="TreeGrafter"/>
</dbReference>
<dbReference type="GO" id="GO:0005925">
    <property type="term" value="C:focal adhesion"/>
    <property type="evidence" value="ECO:0007669"/>
    <property type="project" value="TreeGrafter"/>
</dbReference>
<dbReference type="GO" id="GO:0000139">
    <property type="term" value="C:Golgi membrane"/>
    <property type="evidence" value="ECO:0007669"/>
    <property type="project" value="UniProtKB-SubCell"/>
</dbReference>
<dbReference type="GO" id="GO:0005634">
    <property type="term" value="C:nucleus"/>
    <property type="evidence" value="ECO:0007669"/>
    <property type="project" value="UniProtKB-SubCell"/>
</dbReference>
<dbReference type="GO" id="GO:0048471">
    <property type="term" value="C:perinuclear region of cytoplasm"/>
    <property type="evidence" value="ECO:0000250"/>
    <property type="project" value="UniProtKB"/>
</dbReference>
<dbReference type="GO" id="GO:0044853">
    <property type="term" value="C:plasma membrane raft"/>
    <property type="evidence" value="ECO:0000250"/>
    <property type="project" value="UniProtKB"/>
</dbReference>
<dbReference type="GO" id="GO:0042383">
    <property type="term" value="C:sarcolemma"/>
    <property type="evidence" value="ECO:0007669"/>
    <property type="project" value="TreeGrafter"/>
</dbReference>
<dbReference type="GO" id="GO:0031748">
    <property type="term" value="F:D1 dopamine receptor binding"/>
    <property type="evidence" value="ECO:0000250"/>
    <property type="project" value="UniProtKB"/>
</dbReference>
<dbReference type="GO" id="GO:0060090">
    <property type="term" value="F:molecular adaptor activity"/>
    <property type="evidence" value="ECO:0007669"/>
    <property type="project" value="TreeGrafter"/>
</dbReference>
<dbReference type="GO" id="GO:0019901">
    <property type="term" value="F:protein kinase binding"/>
    <property type="evidence" value="ECO:0007669"/>
    <property type="project" value="TreeGrafter"/>
</dbReference>
<dbReference type="GO" id="GO:0070836">
    <property type="term" value="P:caveola assembly"/>
    <property type="evidence" value="ECO:0000250"/>
    <property type="project" value="UniProtKB"/>
</dbReference>
<dbReference type="GO" id="GO:0007029">
    <property type="term" value="P:endoplasmic reticulum organization"/>
    <property type="evidence" value="ECO:0000250"/>
    <property type="project" value="UniProtKB"/>
</dbReference>
<dbReference type="GO" id="GO:0008286">
    <property type="term" value="P:insulin receptor signaling pathway"/>
    <property type="evidence" value="ECO:0007669"/>
    <property type="project" value="TreeGrafter"/>
</dbReference>
<dbReference type="GO" id="GO:0007005">
    <property type="term" value="P:mitochondrion organization"/>
    <property type="evidence" value="ECO:0000250"/>
    <property type="project" value="UniProtKB"/>
</dbReference>
<dbReference type="GO" id="GO:0001937">
    <property type="term" value="P:negative regulation of endothelial cell proliferation"/>
    <property type="evidence" value="ECO:0000250"/>
    <property type="project" value="UniProtKB"/>
</dbReference>
<dbReference type="GO" id="GO:0060161">
    <property type="term" value="P:positive regulation of dopamine receptor signaling pathway"/>
    <property type="evidence" value="ECO:0000250"/>
    <property type="project" value="UniProtKB"/>
</dbReference>
<dbReference type="GO" id="GO:0051480">
    <property type="term" value="P:regulation of cytosolic calcium ion concentration"/>
    <property type="evidence" value="ECO:0007669"/>
    <property type="project" value="TreeGrafter"/>
</dbReference>
<dbReference type="GO" id="GO:0048741">
    <property type="term" value="P:skeletal muscle fiber development"/>
    <property type="evidence" value="ECO:0000250"/>
    <property type="project" value="UniProtKB"/>
</dbReference>
<dbReference type="GO" id="GO:0048278">
    <property type="term" value="P:vesicle docking"/>
    <property type="evidence" value="ECO:0000250"/>
    <property type="project" value="UniProtKB"/>
</dbReference>
<dbReference type="GO" id="GO:0006906">
    <property type="term" value="P:vesicle fusion"/>
    <property type="evidence" value="ECO:0000250"/>
    <property type="project" value="UniProtKB"/>
</dbReference>
<dbReference type="InterPro" id="IPR001612">
    <property type="entry name" value="Caveolin"/>
</dbReference>
<dbReference type="InterPro" id="IPR018361">
    <property type="entry name" value="Caveolin_CS"/>
</dbReference>
<dbReference type="PANTHER" id="PTHR10844">
    <property type="entry name" value="CAVEOLIN"/>
    <property type="match status" value="1"/>
</dbReference>
<dbReference type="PANTHER" id="PTHR10844:SF3">
    <property type="entry name" value="CAVEOLIN-2"/>
    <property type="match status" value="1"/>
</dbReference>
<dbReference type="Pfam" id="PF01146">
    <property type="entry name" value="Caveolin"/>
    <property type="match status" value="1"/>
</dbReference>
<dbReference type="PROSITE" id="PS01210">
    <property type="entry name" value="CAVEOLIN"/>
    <property type="match status" value="1"/>
</dbReference>
<keyword id="KW-1003">Cell membrane</keyword>
<keyword id="KW-0963">Cytoplasm</keyword>
<keyword id="KW-0333">Golgi apparatus</keyword>
<keyword id="KW-0472">Membrane</keyword>
<keyword id="KW-0539">Nucleus</keyword>
<keyword id="KW-0597">Phosphoprotein</keyword>
<feature type="chain" id="PRO_0000251906" description="Caveolin-2">
    <location>
        <begin position="1"/>
        <end position="162"/>
    </location>
</feature>
<feature type="topological domain" description="Cytoplasmic" evidence="4">
    <location>
        <begin position="1"/>
        <end position="86"/>
    </location>
</feature>
<feature type="intramembrane region" description="Helical" evidence="4">
    <location>
        <begin position="87"/>
        <end position="107"/>
    </location>
</feature>
<feature type="topological domain" description="Cytoplasmic" evidence="4">
    <location>
        <begin position="108"/>
        <end position="162"/>
    </location>
</feature>
<feature type="modified residue" description="Phosphotyrosine; by SRC" evidence="2">
    <location>
        <position position="19"/>
    </location>
</feature>
<feature type="modified residue" description="Phosphoserine" evidence="3">
    <location>
        <position position="20"/>
    </location>
</feature>
<feature type="modified residue" description="Phosphoserine" evidence="2">
    <location>
        <position position="23"/>
    </location>
</feature>
<feature type="modified residue" description="Phosphotyrosine; by SRC" evidence="2">
    <location>
        <position position="27"/>
    </location>
</feature>
<feature type="modified residue" description="Phosphoserine" evidence="2">
    <location>
        <position position="36"/>
    </location>
</feature>
<organism>
    <name type="scientific">Chlorocebus aethiops</name>
    <name type="common">Green monkey</name>
    <name type="synonym">Cercopithecus aethiops</name>
    <dbReference type="NCBI Taxonomy" id="9534"/>
    <lineage>
        <taxon>Eukaryota</taxon>
        <taxon>Metazoa</taxon>
        <taxon>Chordata</taxon>
        <taxon>Craniata</taxon>
        <taxon>Vertebrata</taxon>
        <taxon>Euteleostomi</taxon>
        <taxon>Mammalia</taxon>
        <taxon>Eutheria</taxon>
        <taxon>Euarchontoglires</taxon>
        <taxon>Primates</taxon>
        <taxon>Haplorrhini</taxon>
        <taxon>Catarrhini</taxon>
        <taxon>Cercopithecidae</taxon>
        <taxon>Cercopithecinae</taxon>
        <taxon>Chlorocebus</taxon>
    </lineage>
</organism>
<comment type="function">
    <text evidence="1">May act as a scaffolding protein within caveolar membranes. Interacts directly with G-protein alpha subunits and can functionally regulate their activity. Acts as an accessory protein in conjunction with CAV1 in targeting to lipid rafts and driving caveolae formation. The Ser-36 phosphorylated form has a role in modulating mitosis in endothelial cells. Positive regulator of cellular mitogenesis of the MAPK signaling pathway. Required for the insulin-stimulated nuclear translocation and activation of MAPK1 and STAT3, and the subsequent regulation of cell cycle progression (By similarity).</text>
</comment>
<comment type="subunit">
    <text evidence="1">Monomer or homodimer (By similarity). Interacts with CAV1; the interaction forms a stable heterooligomeric complex that is required for targeting to lipid rafts and for caveolae formation. Tyrosine phosphorylated forms do not form heterooligomers with the Tyr-19-phosphorylated form existing as a monomer or dimer, and the Tyr-27-form as a monomer only. Interacts (tyrosine phosphorylated form) with the SH2 domain-containing proteins, RASA1, NCK1 and SRC. Interacts (tyrosine phosphorylated form) with INSR, the interaction (Tyr-27-phosphorylated form) is increased on insulin stimulation. Interacts (Tyr-19 phosphorylated form) with MAPK1 (phosphorylated form); the interaction, promoted by insulin, leads to nuclear location and MAPK1 activation. Interacts with STAT3; the interaction is increased on insulin-induced tyrosine phosphorylation leading to STAT activation (By similarity).</text>
</comment>
<comment type="subcellular location">
    <subcellularLocation>
        <location evidence="1">Nucleus</location>
    </subcellularLocation>
    <subcellularLocation>
        <location evidence="1">Cytoplasm</location>
    </subcellularLocation>
    <subcellularLocation>
        <location>Golgi apparatus membrane</location>
        <topology>Peripheral membrane protein</topology>
    </subcellularLocation>
    <subcellularLocation>
        <location>Cell membrane</location>
        <topology>Peripheral membrane protein</topology>
    </subcellularLocation>
    <subcellularLocation>
        <location>Membrane</location>
        <location>Caveola</location>
        <topology>Peripheral membrane protein</topology>
    </subcellularLocation>
    <text evidence="1">Potential hairpin-like structure in the membrane. Membrane protein of caveolae. Tyr-19-phosphorylated form is enriched at sites of cell-cell contact and is translocated to the nucleus in complex with MAPK1 in response to insulin (By similarity). Tyr-27-phosphorylated form is located both in the cytoplasm and plasma membrane. CAV1-mediated Ser-23-phosphorylated form locates to the plasma membrane. Ser-36-phosphorylated form resides in intracellular compartments.</text>
</comment>
<comment type="PTM">
    <text evidence="1">Phosphorylated on serine and tyrosine residues. CAV1 promotes phosphorylation on Ser-23 which then targets the complex to the plasma membrane, lipid rafts and caveolae. Phosphorylation on Ser-36 appears to modulate mitosis in endothelial cells (By similarity). Phosphorylation on both Tyr-19 and Tyr-27 is required for insulin-induced 'Ser-727' phosphorylation of STAT3 and its activation. Phosphorylation on Tyr-19 is required for insulin-induced phosphorylation of MAPK1 and DNA binding of STAT3. Tyrosine phosphorylation is induced by both EGF and insulin (By. similarity).</text>
</comment>
<comment type="similarity">
    <text evidence="5">Belongs to the caveolin family.</text>
</comment>
<name>CAV2_CHLAE</name>
<accession>Q2IBA4</accession>
<evidence type="ECO:0000250" key="1"/>
<evidence type="ECO:0000250" key="2">
    <source>
        <dbReference type="UniProtKB" id="P51636"/>
    </source>
</evidence>
<evidence type="ECO:0000250" key="3">
    <source>
        <dbReference type="UniProtKB" id="Q9WVC3"/>
    </source>
</evidence>
<evidence type="ECO:0000255" key="4"/>
<evidence type="ECO:0000305" key="5"/>
<protein>
    <recommendedName>
        <fullName>Caveolin-2</fullName>
    </recommendedName>
</protein>
<reference key="1">
    <citation type="submission" date="2006-01" db="EMBL/GenBank/DDBJ databases">
        <title>NISC comparative sequencing initiative.</title>
        <authorList>
            <person name="Antonellis A."/>
            <person name="Ayele K."/>
            <person name="Benjamin B."/>
            <person name="Blakesley R.W."/>
            <person name="Boakye A."/>
            <person name="Bouffard G.G."/>
            <person name="Brinkley C."/>
            <person name="Brooks S."/>
            <person name="Chu G."/>
            <person name="Coleman H."/>
            <person name="Engle J."/>
            <person name="Gestole M."/>
            <person name="Greene A."/>
            <person name="Guan X."/>
            <person name="Gupta J."/>
            <person name="Haghighi P."/>
            <person name="Han J."/>
            <person name="Hansen N."/>
            <person name="Ho S.-L."/>
            <person name="Hu P."/>
            <person name="Hunter G."/>
            <person name="Hurle B."/>
            <person name="Idol J.R."/>
            <person name="Kwong P."/>
            <person name="Laric P."/>
            <person name="Larson S."/>
            <person name="Lee-Lin S.-Q."/>
            <person name="Legaspi R."/>
            <person name="Madden M."/>
            <person name="Maduro Q.L."/>
            <person name="Maduro V.B."/>
            <person name="Margulies E.H."/>
            <person name="Masiello C."/>
            <person name="Maskeri B."/>
            <person name="McDowell J."/>
            <person name="Mojidi H.A."/>
            <person name="Mullikin J.C."/>
            <person name="Oestreicher J.S."/>
            <person name="Park M."/>
            <person name="Portnoy M.E."/>
            <person name="Prasad A."/>
            <person name="Puri O."/>
            <person name="Reddix-Dugue N."/>
            <person name="Schandler K."/>
            <person name="Schueler M.G."/>
            <person name="Sison C."/>
            <person name="Stantripop S."/>
            <person name="Stephen E."/>
            <person name="Taye A."/>
            <person name="Thomas J.W."/>
            <person name="Thomas P.J."/>
            <person name="Tsipouri V."/>
            <person name="Ung L."/>
            <person name="Vogt J.L."/>
            <person name="Wetherby K.D."/>
            <person name="Young A."/>
            <person name="Green E.D."/>
        </authorList>
    </citation>
    <scope>NUCLEOTIDE SEQUENCE [LARGE SCALE GENOMIC DNA]</scope>
</reference>
<proteinExistence type="inferred from homology"/>